<reference key="1">
    <citation type="journal article" date="1992" name="J. Biol. Chem.">
        <title>Rab15, a novel low molecular weight GTP-binding protein specifically expressed in rat brain.</title>
        <authorList>
            <person name="Elferink L.A."/>
            <person name="Anzai K."/>
            <person name="Scheller R.H."/>
        </authorList>
    </citation>
    <scope>NUCLEOTIDE SEQUENCE [MRNA]</scope>
    <source>
        <strain>Sprague-Dawley</strain>
        <tissue>Brain</tissue>
    </source>
</reference>
<reference key="2">
    <citation type="journal article" date="2010" name="Am. J. Physiol.">
        <title>Rab10 associates with primary cilia and the exocyst complex in renal epithelial cells.</title>
        <authorList>
            <person name="Babbey C.M."/>
            <person name="Bacallao R.L."/>
            <person name="Dunn K.W."/>
        </authorList>
    </citation>
    <scope>SUBCELLULAR LOCATION</scope>
</reference>
<reference key="3">
    <citation type="journal article" date="2011" name="Dev. Cell">
        <title>Lgl1 activation of rab10 promotes axonal membrane trafficking underlying neuronal polarization.</title>
        <authorList>
            <person name="Wang T."/>
            <person name="Liu Y."/>
            <person name="Xu X.H."/>
            <person name="Deng C.Y."/>
            <person name="Wu K.Y."/>
            <person name="Zhu J."/>
            <person name="Fu X.Q."/>
            <person name="He M."/>
            <person name="Luo Z.G."/>
        </authorList>
    </citation>
    <scope>FUNCTION IN AXON DEVELOPMENT</scope>
    <scope>INTERACTION WITH LLGL1 AND GDI1</scope>
</reference>
<reference key="4">
    <citation type="journal article" date="2014" name="Cell Res.">
        <title>MARCKS regulates membrane targeting of Rab10 vesicles to promote axon development.</title>
        <authorList>
            <person name="Xu X.H."/>
            <person name="Deng C.Y."/>
            <person name="Liu Y."/>
            <person name="He M."/>
            <person name="Peng J."/>
            <person name="Wang T."/>
            <person name="Yuan L."/>
            <person name="Zheng Z.S."/>
            <person name="Blackshear P.J."/>
            <person name="Luo Z.G."/>
        </authorList>
    </citation>
    <scope>FUNCTION</scope>
    <scope>INTERACTION WITH MARCKS</scope>
</reference>
<feature type="chain" id="PRO_0000121148" description="Ras-related protein Rab-10">
    <location>
        <begin position="1"/>
        <end position="200"/>
    </location>
</feature>
<feature type="short sequence motif" description="Switch 1" evidence="5">
    <location>
        <begin position="32"/>
        <end position="46"/>
    </location>
</feature>
<feature type="short sequence motif" description="Switch 2" evidence="5">
    <location>
        <begin position="64"/>
        <end position="81"/>
    </location>
</feature>
<feature type="binding site" evidence="3">
    <location>
        <position position="18"/>
    </location>
    <ligand>
        <name>GTP</name>
        <dbReference type="ChEBI" id="CHEBI:37565"/>
    </ligand>
</feature>
<feature type="binding site" evidence="3">
    <location>
        <position position="19"/>
    </location>
    <ligand>
        <name>GTP</name>
        <dbReference type="ChEBI" id="CHEBI:37565"/>
    </ligand>
</feature>
<feature type="binding site" evidence="3">
    <location>
        <position position="20"/>
    </location>
    <ligand>
        <name>GTP</name>
        <dbReference type="ChEBI" id="CHEBI:37565"/>
    </ligand>
</feature>
<feature type="binding site" evidence="3">
    <location>
        <position position="21"/>
    </location>
    <ligand>
        <name>GTP</name>
        <dbReference type="ChEBI" id="CHEBI:37565"/>
    </ligand>
</feature>
<feature type="binding site" evidence="3">
    <location>
        <position position="22"/>
    </location>
    <ligand>
        <name>GTP</name>
        <dbReference type="ChEBI" id="CHEBI:37565"/>
    </ligand>
</feature>
<feature type="binding site" evidence="3">
    <location>
        <position position="23"/>
    </location>
    <ligand>
        <name>GTP</name>
        <dbReference type="ChEBI" id="CHEBI:37565"/>
    </ligand>
</feature>
<feature type="binding site" evidence="3">
    <location>
        <position position="23"/>
    </location>
    <ligand>
        <name>Mg(2+)</name>
        <dbReference type="ChEBI" id="CHEBI:18420"/>
    </ligand>
</feature>
<feature type="binding site" evidence="3">
    <location>
        <position position="24"/>
    </location>
    <ligand>
        <name>GTP</name>
        <dbReference type="ChEBI" id="CHEBI:37565"/>
    </ligand>
</feature>
<feature type="binding site" evidence="3">
    <location>
        <position position="35"/>
    </location>
    <ligand>
        <name>GTP</name>
        <dbReference type="ChEBI" id="CHEBI:37565"/>
    </ligand>
</feature>
<feature type="binding site" evidence="3">
    <location>
        <position position="36"/>
    </location>
    <ligand>
        <name>GTP</name>
        <dbReference type="ChEBI" id="CHEBI:37565"/>
    </ligand>
</feature>
<feature type="binding site" evidence="3">
    <location>
        <position position="40"/>
    </location>
    <ligand>
        <name>GTP</name>
        <dbReference type="ChEBI" id="CHEBI:37565"/>
    </ligand>
</feature>
<feature type="binding site" evidence="3">
    <location>
        <position position="41"/>
    </location>
    <ligand>
        <name>GTP</name>
        <dbReference type="ChEBI" id="CHEBI:37565"/>
    </ligand>
</feature>
<feature type="binding site" evidence="3">
    <location>
        <position position="41"/>
    </location>
    <ligand>
        <name>Mg(2+)</name>
        <dbReference type="ChEBI" id="CHEBI:18420"/>
    </ligand>
</feature>
<feature type="binding site" evidence="3">
    <location>
        <position position="64"/>
    </location>
    <ligand>
        <name>Mg(2+)</name>
        <dbReference type="ChEBI" id="CHEBI:18420"/>
    </ligand>
</feature>
<feature type="binding site" evidence="3">
    <location>
        <position position="67"/>
    </location>
    <ligand>
        <name>GTP</name>
        <dbReference type="ChEBI" id="CHEBI:37565"/>
    </ligand>
</feature>
<feature type="binding site" evidence="3">
    <location>
        <position position="122"/>
    </location>
    <ligand>
        <name>GTP</name>
        <dbReference type="ChEBI" id="CHEBI:37565"/>
    </ligand>
</feature>
<feature type="binding site" evidence="3">
    <location>
        <position position="123"/>
    </location>
    <ligand>
        <name>GTP</name>
        <dbReference type="ChEBI" id="CHEBI:37565"/>
    </ligand>
</feature>
<feature type="binding site" evidence="3">
    <location>
        <position position="125"/>
    </location>
    <ligand>
        <name>GTP</name>
        <dbReference type="ChEBI" id="CHEBI:37565"/>
    </ligand>
</feature>
<feature type="binding site" evidence="3">
    <location>
        <position position="126"/>
    </location>
    <ligand>
        <name>GTP</name>
        <dbReference type="ChEBI" id="CHEBI:37565"/>
    </ligand>
</feature>
<feature type="binding site" evidence="3">
    <location>
        <position position="152"/>
    </location>
    <ligand>
        <name>GTP</name>
        <dbReference type="ChEBI" id="CHEBI:37565"/>
    </ligand>
</feature>
<feature type="binding site" evidence="3">
    <location>
        <position position="153"/>
    </location>
    <ligand>
        <name>GTP</name>
        <dbReference type="ChEBI" id="CHEBI:37565"/>
    </ligand>
</feature>
<feature type="binding site" evidence="3">
    <location>
        <position position="154"/>
    </location>
    <ligand>
        <name>GTP</name>
        <dbReference type="ChEBI" id="CHEBI:37565"/>
    </ligand>
</feature>
<feature type="modified residue" description="Phosphothreonine" evidence="3">
    <location>
        <position position="73"/>
    </location>
</feature>
<feature type="modified residue" description="N6-acetyllysine" evidence="3">
    <location>
        <position position="102"/>
    </location>
</feature>
<feature type="lipid moiety-binding region" description="S-geranylgeranyl cysteine" evidence="1">
    <location>
        <position position="199"/>
    </location>
</feature>
<feature type="lipid moiety-binding region" description="S-geranylgeranyl cysteine" evidence="1">
    <location>
        <position position="200"/>
    </location>
</feature>
<feature type="cross-link" description="Glycyl lysine isopeptide (Lys-Gly) (interchain with G-Cter in ubiquitin)" evidence="3">
    <location>
        <position position="102"/>
    </location>
</feature>
<feature type="cross-link" description="Glycyl lysine isopeptide (Lys-Gly) (interchain with G-Cter in ubiquitin)" evidence="3">
    <location>
        <position position="136"/>
    </location>
</feature>
<feature type="cross-link" description="Glycyl lysine isopeptide (Lys-Gly) (interchain with G-Cter in ubiquitin)" evidence="3">
    <location>
        <position position="154"/>
    </location>
</feature>
<keyword id="KW-0007">Acetylation</keyword>
<keyword id="KW-0966">Cell projection</keyword>
<keyword id="KW-0963">Cytoplasm</keyword>
<keyword id="KW-0968">Cytoplasmic vesicle</keyword>
<keyword id="KW-0256">Endoplasmic reticulum</keyword>
<keyword id="KW-0967">Endosome</keyword>
<keyword id="KW-0333">Golgi apparatus</keyword>
<keyword id="KW-0342">GTP-binding</keyword>
<keyword id="KW-0378">Hydrolase</keyword>
<keyword id="KW-1017">Isopeptide bond</keyword>
<keyword id="KW-0449">Lipoprotein</keyword>
<keyword id="KW-0458">Lysosome</keyword>
<keyword id="KW-0460">Magnesium</keyword>
<keyword id="KW-0472">Membrane</keyword>
<keyword id="KW-0479">Metal-binding</keyword>
<keyword id="KW-0547">Nucleotide-binding</keyword>
<keyword id="KW-0597">Phosphoprotein</keyword>
<keyword id="KW-0636">Prenylation</keyword>
<keyword id="KW-0653">Protein transport</keyword>
<keyword id="KW-1185">Reference proteome</keyword>
<keyword id="KW-0813">Transport</keyword>
<keyword id="KW-0832">Ubl conjugation</keyword>
<organism>
    <name type="scientific">Rattus norvegicus</name>
    <name type="common">Rat</name>
    <dbReference type="NCBI Taxonomy" id="10116"/>
    <lineage>
        <taxon>Eukaryota</taxon>
        <taxon>Metazoa</taxon>
        <taxon>Chordata</taxon>
        <taxon>Craniata</taxon>
        <taxon>Vertebrata</taxon>
        <taxon>Euteleostomi</taxon>
        <taxon>Mammalia</taxon>
        <taxon>Eutheria</taxon>
        <taxon>Euarchontoglires</taxon>
        <taxon>Glires</taxon>
        <taxon>Rodentia</taxon>
        <taxon>Myomorpha</taxon>
        <taxon>Muroidea</taxon>
        <taxon>Muridae</taxon>
        <taxon>Murinae</taxon>
        <taxon>Rattus</taxon>
    </lineage>
</organism>
<gene>
    <name evidence="11" type="primary">Rab10</name>
</gene>
<proteinExistence type="evidence at protein level"/>
<protein>
    <recommendedName>
        <fullName>Ras-related protein Rab-10</fullName>
        <ecNumber evidence="3">3.6.5.2</ecNumber>
    </recommendedName>
</protein>
<dbReference type="EC" id="3.6.5.2" evidence="3"/>
<dbReference type="EMBL" id="M83677">
    <property type="protein sequence ID" value="AAA41991.1"/>
    <property type="molecule type" value="mRNA"/>
</dbReference>
<dbReference type="PIR" id="B42148">
    <property type="entry name" value="B42148"/>
</dbReference>
<dbReference type="SMR" id="P35281"/>
<dbReference type="FunCoup" id="P35281">
    <property type="interactions" value="2942"/>
</dbReference>
<dbReference type="IntAct" id="P35281">
    <property type="interactions" value="3"/>
</dbReference>
<dbReference type="MINT" id="P35281"/>
<dbReference type="STRING" id="10116.ENSRNOP00000065234"/>
<dbReference type="iPTMnet" id="P35281"/>
<dbReference type="PhosphoSitePlus" id="P35281"/>
<dbReference type="SwissPalm" id="P35281"/>
<dbReference type="jPOST" id="P35281"/>
<dbReference type="PaxDb" id="10116-ENSRNOP00000065234"/>
<dbReference type="AGR" id="RGD:620879"/>
<dbReference type="RGD" id="620879">
    <property type="gene designation" value="Rab10"/>
</dbReference>
<dbReference type="eggNOG" id="KOG0078">
    <property type="taxonomic scope" value="Eukaryota"/>
</dbReference>
<dbReference type="InParanoid" id="P35281"/>
<dbReference type="PhylomeDB" id="P35281"/>
<dbReference type="Reactome" id="R-RNO-6798695">
    <property type="pathway name" value="Neutrophil degranulation"/>
</dbReference>
<dbReference type="Reactome" id="R-RNO-8873719">
    <property type="pathway name" value="RAB geranylgeranylation"/>
</dbReference>
<dbReference type="Reactome" id="R-RNO-8876198">
    <property type="pathway name" value="RAB GEFs exchange GTP for GDP on RABs"/>
</dbReference>
<dbReference type="PRO" id="PR:P35281"/>
<dbReference type="Proteomes" id="UP000002494">
    <property type="component" value="Unplaced"/>
</dbReference>
<dbReference type="GO" id="GO:0005929">
    <property type="term" value="C:cilium"/>
    <property type="evidence" value="ECO:0000314"/>
    <property type="project" value="UniProtKB"/>
</dbReference>
<dbReference type="GO" id="GO:0005789">
    <property type="term" value="C:endoplasmic reticulum membrane"/>
    <property type="evidence" value="ECO:0000250"/>
    <property type="project" value="UniProtKB"/>
</dbReference>
<dbReference type="GO" id="GO:0071782">
    <property type="term" value="C:endoplasmic reticulum tubular network"/>
    <property type="evidence" value="ECO:0000250"/>
    <property type="project" value="UniProtKB"/>
</dbReference>
<dbReference type="GO" id="GO:0005768">
    <property type="term" value="C:endosome"/>
    <property type="evidence" value="ECO:0000250"/>
    <property type="project" value="UniProtKB"/>
</dbReference>
<dbReference type="GO" id="GO:0010008">
    <property type="term" value="C:endosome membrane"/>
    <property type="evidence" value="ECO:0000250"/>
    <property type="project" value="UniProtKB"/>
</dbReference>
<dbReference type="GO" id="GO:0000145">
    <property type="term" value="C:exocyst"/>
    <property type="evidence" value="ECO:0000266"/>
    <property type="project" value="RGD"/>
</dbReference>
<dbReference type="GO" id="GO:0070382">
    <property type="term" value="C:exocytic vesicle"/>
    <property type="evidence" value="ECO:0000266"/>
    <property type="project" value="RGD"/>
</dbReference>
<dbReference type="GO" id="GO:0005794">
    <property type="term" value="C:Golgi apparatus"/>
    <property type="evidence" value="ECO:0000250"/>
    <property type="project" value="UniProtKB"/>
</dbReference>
<dbReference type="GO" id="GO:0032593">
    <property type="term" value="C:insulin-responsive compartment"/>
    <property type="evidence" value="ECO:0000250"/>
    <property type="project" value="UniProtKB"/>
</dbReference>
<dbReference type="GO" id="GO:0005764">
    <property type="term" value="C:lysosome"/>
    <property type="evidence" value="ECO:0007669"/>
    <property type="project" value="UniProtKB-SubCell"/>
</dbReference>
<dbReference type="GO" id="GO:0016020">
    <property type="term" value="C:membrane"/>
    <property type="evidence" value="ECO:0000318"/>
    <property type="project" value="GO_Central"/>
</dbReference>
<dbReference type="GO" id="GO:0048471">
    <property type="term" value="C:perinuclear region of cytoplasm"/>
    <property type="evidence" value="ECO:0000314"/>
    <property type="project" value="RGD"/>
</dbReference>
<dbReference type="GO" id="GO:0030670">
    <property type="term" value="C:phagocytic vesicle membrane"/>
    <property type="evidence" value="ECO:0007669"/>
    <property type="project" value="UniProtKB-SubCell"/>
</dbReference>
<dbReference type="GO" id="GO:0005886">
    <property type="term" value="C:plasma membrane"/>
    <property type="evidence" value="ECO:0000266"/>
    <property type="project" value="RGD"/>
</dbReference>
<dbReference type="GO" id="GO:0055037">
    <property type="term" value="C:recycling endosome"/>
    <property type="evidence" value="ECO:0000250"/>
    <property type="project" value="UniProtKB"/>
</dbReference>
<dbReference type="GO" id="GO:0055038">
    <property type="term" value="C:recycling endosome membrane"/>
    <property type="evidence" value="ECO:0007669"/>
    <property type="project" value="UniProtKB-SubCell"/>
</dbReference>
<dbReference type="GO" id="GO:0099503">
    <property type="term" value="C:secretory vesicle"/>
    <property type="evidence" value="ECO:0000318"/>
    <property type="project" value="GO_Central"/>
</dbReference>
<dbReference type="GO" id="GO:0030672">
    <property type="term" value="C:synaptic vesicle membrane"/>
    <property type="evidence" value="ECO:0000314"/>
    <property type="project" value="SynGO"/>
</dbReference>
<dbReference type="GO" id="GO:0005802">
    <property type="term" value="C:trans-Golgi network"/>
    <property type="evidence" value="ECO:0000314"/>
    <property type="project" value="RGD"/>
</dbReference>
<dbReference type="GO" id="GO:0003925">
    <property type="term" value="F:G protein activity"/>
    <property type="evidence" value="ECO:0007669"/>
    <property type="project" value="UniProtKB-EC"/>
</dbReference>
<dbReference type="GO" id="GO:0019003">
    <property type="term" value="F:GDP binding"/>
    <property type="evidence" value="ECO:0000250"/>
    <property type="project" value="UniProtKB"/>
</dbReference>
<dbReference type="GO" id="GO:0051021">
    <property type="term" value="F:GDP-dissociation inhibitor binding"/>
    <property type="evidence" value="ECO:0000353"/>
    <property type="project" value="RGD"/>
</dbReference>
<dbReference type="GO" id="GO:0005525">
    <property type="term" value="F:GTP binding"/>
    <property type="evidence" value="ECO:0000250"/>
    <property type="project" value="UniProtKB"/>
</dbReference>
<dbReference type="GO" id="GO:0031489">
    <property type="term" value="F:myosin V binding"/>
    <property type="evidence" value="ECO:0000353"/>
    <property type="project" value="RGD"/>
</dbReference>
<dbReference type="GO" id="GO:0019882">
    <property type="term" value="P:antigen processing and presentation"/>
    <property type="evidence" value="ECO:0000266"/>
    <property type="project" value="RGD"/>
</dbReference>
<dbReference type="GO" id="GO:0007409">
    <property type="term" value="P:axonogenesis"/>
    <property type="evidence" value="ECO:0000315"/>
    <property type="project" value="UniProtKB"/>
</dbReference>
<dbReference type="GO" id="GO:0071236">
    <property type="term" value="P:cellular response to antibiotic"/>
    <property type="evidence" value="ECO:0000270"/>
    <property type="project" value="RGD"/>
</dbReference>
<dbReference type="GO" id="GO:0032869">
    <property type="term" value="P:cellular response to insulin stimulus"/>
    <property type="evidence" value="ECO:0000250"/>
    <property type="project" value="UniProtKB"/>
</dbReference>
<dbReference type="GO" id="GO:0071786">
    <property type="term" value="P:endoplasmic reticulum tubular network organization"/>
    <property type="evidence" value="ECO:0000250"/>
    <property type="project" value="UniProtKB"/>
</dbReference>
<dbReference type="GO" id="GO:0016197">
    <property type="term" value="P:endosomal transport"/>
    <property type="evidence" value="ECO:0000250"/>
    <property type="project" value="UniProtKB"/>
</dbReference>
<dbReference type="GO" id="GO:0045200">
    <property type="term" value="P:establishment of neuroblast polarity"/>
    <property type="evidence" value="ECO:0000315"/>
    <property type="project" value="UniProtKB"/>
</dbReference>
<dbReference type="GO" id="GO:0097051">
    <property type="term" value="P:establishment of protein localization to endoplasmic reticulum membrane"/>
    <property type="evidence" value="ECO:0000250"/>
    <property type="project" value="UniProtKB"/>
</dbReference>
<dbReference type="GO" id="GO:0090150">
    <property type="term" value="P:establishment of protein localization to membrane"/>
    <property type="evidence" value="ECO:0000266"/>
    <property type="project" value="RGD"/>
</dbReference>
<dbReference type="GO" id="GO:0006887">
    <property type="term" value="P:exocytosis"/>
    <property type="evidence" value="ECO:0000318"/>
    <property type="project" value="GO_Central"/>
</dbReference>
<dbReference type="GO" id="GO:0043001">
    <property type="term" value="P:Golgi to plasma membrane protein transport"/>
    <property type="evidence" value="ECO:0000250"/>
    <property type="project" value="UniProtKB"/>
</dbReference>
<dbReference type="GO" id="GO:0006893">
    <property type="term" value="P:Golgi to plasma membrane transport"/>
    <property type="evidence" value="ECO:0000315"/>
    <property type="project" value="UniProtKB"/>
</dbReference>
<dbReference type="GO" id="GO:0030859">
    <property type="term" value="P:polarized epithelial cell differentiation"/>
    <property type="evidence" value="ECO:0000250"/>
    <property type="project" value="UniProtKB"/>
</dbReference>
<dbReference type="GO" id="GO:1903361">
    <property type="term" value="P:protein localization to basolateral plasma membrane"/>
    <property type="evidence" value="ECO:0000250"/>
    <property type="project" value="UniProtKB"/>
</dbReference>
<dbReference type="GO" id="GO:0072659">
    <property type="term" value="P:protein localization to plasma membrane"/>
    <property type="evidence" value="ECO:0000250"/>
    <property type="project" value="UniProtKB"/>
</dbReference>
<dbReference type="GO" id="GO:0045055">
    <property type="term" value="P:regulated exocytosis"/>
    <property type="evidence" value="ECO:0000266"/>
    <property type="project" value="RGD"/>
</dbReference>
<dbReference type="GO" id="GO:0016192">
    <property type="term" value="P:vesicle-mediated transport"/>
    <property type="evidence" value="ECO:0000250"/>
    <property type="project" value="UniProtKB"/>
</dbReference>
<dbReference type="CDD" id="cd01867">
    <property type="entry name" value="Rab8_Rab10_Rab13_like"/>
    <property type="match status" value="1"/>
</dbReference>
<dbReference type="FunFam" id="3.40.50.300:FF:000202">
    <property type="entry name" value="ras-related protein Rab-8A"/>
    <property type="match status" value="1"/>
</dbReference>
<dbReference type="Gene3D" id="3.40.50.300">
    <property type="entry name" value="P-loop containing nucleotide triphosphate hydrolases"/>
    <property type="match status" value="1"/>
</dbReference>
<dbReference type="InterPro" id="IPR027417">
    <property type="entry name" value="P-loop_NTPase"/>
</dbReference>
<dbReference type="InterPro" id="IPR005225">
    <property type="entry name" value="Small_GTP-bd"/>
</dbReference>
<dbReference type="InterPro" id="IPR001806">
    <property type="entry name" value="Small_GTPase"/>
</dbReference>
<dbReference type="InterPro" id="IPR050305">
    <property type="entry name" value="Small_GTPase_Rab"/>
</dbReference>
<dbReference type="NCBIfam" id="TIGR00231">
    <property type="entry name" value="small_GTP"/>
    <property type="match status" value="1"/>
</dbReference>
<dbReference type="PANTHER" id="PTHR47980">
    <property type="entry name" value="LD44762P"/>
    <property type="match status" value="1"/>
</dbReference>
<dbReference type="Pfam" id="PF00071">
    <property type="entry name" value="Ras"/>
    <property type="match status" value="1"/>
</dbReference>
<dbReference type="PRINTS" id="PR00449">
    <property type="entry name" value="RASTRNSFRMNG"/>
</dbReference>
<dbReference type="SMART" id="SM00175">
    <property type="entry name" value="RAB"/>
    <property type="match status" value="1"/>
</dbReference>
<dbReference type="SMART" id="SM00176">
    <property type="entry name" value="RAN"/>
    <property type="match status" value="1"/>
</dbReference>
<dbReference type="SMART" id="SM00173">
    <property type="entry name" value="RAS"/>
    <property type="match status" value="1"/>
</dbReference>
<dbReference type="SMART" id="SM00174">
    <property type="entry name" value="RHO"/>
    <property type="match status" value="1"/>
</dbReference>
<dbReference type="SUPFAM" id="SSF52540">
    <property type="entry name" value="P-loop containing nucleoside triphosphate hydrolases"/>
    <property type="match status" value="1"/>
</dbReference>
<dbReference type="PROSITE" id="PS51419">
    <property type="entry name" value="RAB"/>
    <property type="match status" value="1"/>
</dbReference>
<evidence type="ECO:0000250" key="1"/>
<evidence type="ECO:0000250" key="2">
    <source>
        <dbReference type="UniProtKB" id="P24409"/>
    </source>
</evidence>
<evidence type="ECO:0000250" key="3">
    <source>
        <dbReference type="UniProtKB" id="P61026"/>
    </source>
</evidence>
<evidence type="ECO:0000250" key="4">
    <source>
        <dbReference type="UniProtKB" id="P61027"/>
    </source>
</evidence>
<evidence type="ECO:0000250" key="5">
    <source>
        <dbReference type="UniProtKB" id="P62820"/>
    </source>
</evidence>
<evidence type="ECO:0000269" key="6">
    <source>
    </source>
</evidence>
<evidence type="ECO:0000269" key="7">
    <source>
    </source>
</evidence>
<evidence type="ECO:0000269" key="8">
    <source>
    </source>
</evidence>
<evidence type="ECO:0000305" key="9"/>
<evidence type="ECO:0000305" key="10">
    <source>
    </source>
</evidence>
<evidence type="ECO:0000312" key="11">
    <source>
        <dbReference type="RGD" id="620879"/>
    </source>
</evidence>
<name>RAB10_RAT</name>
<accession>P35281</accession>
<comment type="function">
    <text evidence="2 3 4 7 8">The small GTPases Rab are key regulators of intracellular membrane trafficking, from the formation of transport vesicles to their fusion with membranes (PubMed:24662485). Rabs cycle between an inactive GDP-bound form and an active GTP-bound form that is able to recruit to membranes different set of downstream effectors directly responsible for vesicle formation, movement, tethering and fusion (By similarity). That Rab is mainly involved in the biosynthetic transport of proteins from the Golgi to the plasma membrane (By similarity). Regulates, for instance, SLC2A4/GLUT4 glucose transporter-enriched vesicles delivery to the plasma membrane (By similarity). In parallel, it regulates the transport of TLR4, a toll-like receptor to the plasma membrane and therefore may be important for innate immune response (By similarity). Also plays a specific role in asymmetric protein transport to the plasma membrane (By similarity). In neurons, it is involved in axonogenesis through regulation of vesicular membrane trafficking toward the axonal plasma membrane (PubMed:21856246). In epithelial cells, it regulates transport from the Golgi to the basolateral membrane (By similarity). May play a role in the basolateral recycling pathway and in phagosome maturation (By similarity). May play a role in endoplasmic reticulum dynamics and morphology controlling tubulation along microtubules and tubules fusion (By similarity). Together with LRRK2, RAB8A, and RILPL1, it regulates ciliogenesis (By similarity). When phosphorylated by LRRK2 on Thr-73, it binds RILPL1 and inhibits ciliogenesis (By similarity). Participates in the export of a subset of neosynthesized proteins through a Rab8-Rab10-Rab11-dependent endososomal export route (By similarity). Targeted to and stabilized on stressed lysosomes through LRRK2 phosphorylation where it promotes the extracellular release of lysosomal content through EHBP1 and EHNP1L1 effector proteins (By similarity).</text>
</comment>
<comment type="catalytic activity">
    <reaction evidence="3">
        <text>GTP + H2O = GDP + phosphate + H(+)</text>
        <dbReference type="Rhea" id="RHEA:19669"/>
        <dbReference type="ChEBI" id="CHEBI:15377"/>
        <dbReference type="ChEBI" id="CHEBI:15378"/>
        <dbReference type="ChEBI" id="CHEBI:37565"/>
        <dbReference type="ChEBI" id="CHEBI:43474"/>
        <dbReference type="ChEBI" id="CHEBI:58189"/>
        <dbReference type="EC" id="3.6.5.2"/>
    </reaction>
    <physiologicalReaction direction="left-to-right" evidence="3">
        <dbReference type="Rhea" id="RHEA:19670"/>
    </physiologicalReaction>
</comment>
<comment type="cofactor">
    <cofactor evidence="3">
        <name>Mg(2+)</name>
        <dbReference type="ChEBI" id="CHEBI:18420"/>
    </cofactor>
</comment>
<comment type="activity regulation">
    <text evidence="3">Regulated by guanine nucleotide exchange factors (GEFs) DENND4C and RABIF which promote the exchange of bound GDP for free GTP. Regulated by GTPase activating proteins (GAPs) including TBC1D21 which increase the GTP hydrolysis activity. Inhibited by GDP dissociation inhibitors GDI1 and GDI2 which prevent Rab-GDP dissociation.</text>
</comment>
<comment type="subunit">
    <text evidence="2 3 4 7 8">Interacts with MYO5A; mediates the transport to the plasma membrane of SLC2A4/GLUT4 storage vesicles (By similarity). Interacts with GDI1 and with GDI2; negatively regulates RAB10 association with membranes and activation (By similarity). Interacts (GDP-bound form) with LLGL1; the interaction is direct and promotes RAB10 association with membranes and activation through competition with the Rab inhibitor GDI1 (PubMed:21856246). Interacts with EXOC4; probably associates with the exocyst (By similarity). Interacts (GTP-bound form) with MICALCL, MICAL1, MICAL3, EHBP1 and EHBP1L1; at least in case of MICAL1 two molecules of RAB10 can bind to one molecule of MICAL1 (By similarity). Interacts with TBC1D13 (By similarity). Interacts with SEC16A (By similarity). Interacts with CHM (By similarity). Interacts with LRRK2; interaction facilitates phosphorylation of Thr-73 (By similarity). Interacts with RILPL1 and RILPL2 when phosphorylated on Thr-73 (By similarity). Interacts with TBC1D21 (By similarity). Interacts with MARCKS (PubMed:24662485).</text>
</comment>
<comment type="subcellular location">
    <subcellularLocation>
        <location evidence="9">Cytoplasmic vesicle membrane</location>
        <topology evidence="10">Lipid-anchor</topology>
        <orientation evidence="10">Cytoplasmic side</orientation>
    </subcellularLocation>
    <subcellularLocation>
        <location evidence="2">Golgi apparatus</location>
        <location evidence="2">trans-Golgi network membrane</location>
    </subcellularLocation>
    <subcellularLocation>
        <location evidence="3">Endosome membrane</location>
    </subcellularLocation>
    <subcellularLocation>
        <location evidence="2">Recycling endosome membrane</location>
    </subcellularLocation>
    <subcellularLocation>
        <location evidence="2">Cytoplasmic vesicle</location>
        <location evidence="2">Phagosome membrane</location>
    </subcellularLocation>
    <subcellularLocation>
        <location evidence="6">Cell projection</location>
        <location evidence="6">Cilium</location>
    </subcellularLocation>
    <subcellularLocation>
        <location evidence="4">Endoplasmic reticulum membrane</location>
    </subcellularLocation>
    <subcellularLocation>
        <location evidence="4">Cytoplasm</location>
        <location evidence="4">Perinuclear region</location>
    </subcellularLocation>
    <subcellularLocation>
        <location evidence="4">Lysosome</location>
    </subcellularLocation>
    <text evidence="2 3 6">Associates with SLC2A4/GLUT4 storage vesicles (By similarity). Localizes to the base of the cilium (PubMed:20576682). Transiently associates with phagosomes (By similarity). Localizes to the endoplasmic reticulum at domains of new tubule growth (By similarity). Localizes to enlarged lysosomes through LRRK2 phosphorylation (By similarity).</text>
</comment>
<comment type="tissue specificity">
    <text>Highest levels in neural and muscle tissues.</text>
</comment>
<comment type="domain">
    <text evidence="5">Switch 1, switch 2 and the interswitch regions are characteristic of Rab GTPases and mediate the interactions with Rab downstream effectors. The switch regions undergo conformational changes upon nucleotide binding which drives interaction with specific sets of effector proteins, with most effectors only binding to GTP-bound Rab.</text>
</comment>
<comment type="PTM">
    <text evidence="3">Phosphorylation of Thr-73 in the switch II region by LRRK2 prevents the association of RAB regulatory proteins, including CHM and RAB GDP dissociation inhibitors GDI1 and GDI2 (By similarity). Phosphorylation of Thr-73 by LRRK2 is stimulated by RAB29 and RAB32 (By similarity). Phosphorylation by LRRK2 is required for localization to stressed lysosomes (By similarity).</text>
</comment>
<comment type="similarity">
    <text evidence="9">Belongs to the small GTPase superfamily. Rab family.</text>
</comment>
<sequence>MAKKTYDLLFKLLLIGDSGVGKTCVLFRFSDDAFNTTFISTIEIDFKIKTVELQGKKIKLQIWDTAGQERFHTITTSYYRGAMGIMLVYDITNGKSFENISKWLRNIDQHANEDVERMLLRNKCDMDHKRVVPKGKGEQIAREHRIRFFETSAKANINIEKAFLTLPEDILRKTPVKEPNSENVDISSGGGVTGWKSKCC</sequence>